<comment type="function">
    <text evidence="2 8">Plays an important role in caveolar biogenesis and morphology. Regulates caveolae morphology by inducing membrane curvature within caveolae (PubMed:19525939). Plays a role in caveola formation in a tissue-specific manner. Required for the formation of caveolae in the lung and fat endothelia but not in the heart endothelia. Negatively regulates the size or stability of CAVIN complexes in the lung endothelial cells. May play a role in targeting PRKCA to caveolae (By similarity).</text>
</comment>
<comment type="subunit">
    <text evidence="1 2 6 8 10">Component of the CAVIN complex composed of CAVIN1, CAVIN2, CAVIN3 and CAVIN4. Binds to PRKCA in the presence of phosphatidylserine (By similarity). Interacts with CAVIN4; this augments the transactivation of NPPA by CAVIN4 (PubMed:18332105, PubMed:24567387). Interacts with CAVIN1 (PubMed:19525939, PubMed:24567387). Interacts with CAV3 (PubMed:24567387).</text>
</comment>
<comment type="interaction">
    <interactant intactId="EBI-742141">
        <id>O95810</id>
    </interactant>
    <interactant intactId="EBI-10311892">
        <id>Q9NQ94-2</id>
        <label>A1CF</label>
    </interactant>
    <organismsDiffer>false</organismsDiffer>
    <experiments>3</experiments>
</comment>
<comment type="interaction">
    <interactant intactId="EBI-742141">
        <id>O95810</id>
    </interactant>
    <interactant intactId="EBI-603614">
        <id>Q03135</id>
        <label>CAV1</label>
    </interactant>
    <organismsDiffer>false</organismsDiffer>
    <experiments>6</experiments>
</comment>
<comment type="interaction">
    <interactant intactId="EBI-742141">
        <id>O95810</id>
    </interactant>
    <interactant intactId="EBI-2559016">
        <id>Q6NZI2</id>
        <label>CAVIN1</label>
    </interactant>
    <organismsDiffer>false</organismsDiffer>
    <experiments>6</experiments>
</comment>
<comment type="interaction">
    <interactant intactId="EBI-742141">
        <id>O95810</id>
    </interactant>
    <interactant intactId="EBI-348259">
        <id>Q96EZ8</id>
        <label>MCRS1</label>
    </interactant>
    <organismsDiffer>false</organismsDiffer>
    <experiments>3</experiments>
</comment>
<comment type="interaction">
    <interactant intactId="EBI-742141">
        <id>O95810</id>
    </interactant>
    <interactant intactId="EBI-2565501">
        <id>P08567</id>
        <label>PLEK</label>
    </interactant>
    <organismsDiffer>false</organismsDiffer>
    <experiments>4</experiments>
</comment>
<comment type="interaction">
    <interactant intactId="EBI-742141">
        <id>O95810</id>
    </interactant>
    <interactant intactId="EBI-745767">
        <id>Q96S99</id>
        <label>PLEKHF1</label>
    </interactant>
    <organismsDiffer>false</organismsDiffer>
    <experiments>3</experiments>
</comment>
<comment type="interaction">
    <interactant intactId="EBI-742141">
        <id>O95810</id>
    </interactant>
    <interactant intactId="EBI-8451480">
        <id>O75865-2</id>
        <label>TRAPPC6A</label>
    </interactant>
    <organismsDiffer>false</organismsDiffer>
    <experiments>3</experiments>
</comment>
<comment type="subcellular location">
    <subcellularLocation>
        <location evidence="5 9">Cytoplasm</location>
        <location evidence="5 9">Cytosol</location>
    </subcellularLocation>
    <subcellularLocation>
        <location evidence="7 8">Membrane</location>
        <location evidence="7 8">Caveola</location>
    </subcellularLocation>
    <text evidence="7">Localizes in the caveolae in a caveolin-dependent manner.</text>
</comment>
<comment type="tissue specificity">
    <text evidence="5">Highly expressed in heart and lung, and expressed at lower levels in brain, kidney, liver, pancreas, placenta, and skeletal muscle.</text>
</comment>
<comment type="induction">
    <text evidence="5">Up-regulated in asyncronously growing fibroblasts following serum deprivation but not following contact inhibition. Down-regulated during synchronous cell cycle re-entry.</text>
</comment>
<comment type="domain">
    <text evidence="7">The leucine-zipper domain is essential for its localization in the caveolae.</text>
</comment>
<comment type="PTM">
    <text evidence="9">Phosphorylated on Ser residues.</text>
</comment>
<comment type="miscellaneous">
    <text>Binds phosphatidylserine (PS) in a calcium-independent manner. PS-binding is inhibited by phosphotidic acid and phosphatidylinositol. Does not bind phosphatidylcholine.</text>
</comment>
<comment type="similarity">
    <text evidence="12">Belongs to the CAVIN family.</text>
</comment>
<sequence>MGEDAAQAEKFQHPGSDMRQEKPSSPSPMPSSTPSPSLNLGNTEEAIRDNSQVNAVTVLTLLDKLVNMLDAVQENQHKMEQRQISLEGSVKGIQNDLTKLSKYQASTSNTVSKLLEKSRKVSAHTRAVKERMDRQCAQVKRLENNHAQLLRRNHFKVLIFQEENEIPASVFVKQPVSGAVEGKEELPDENKSLEETLHTVDLSSDDDLPHDEEALEDSAEEKVEESRAEKIKRSSLKKVDSLKKAFSRQNIEKKMNKLGTKIVSVERREKIKKSLTSNHQKISSGKSSPFKVSPLTFGRKKVREGESHAENETKSEDLPSSEQMPNDQEEESFAEGHSEASLASALVEGEIAEEAAEKATSRGSNSGMDSNIDLTIVEDEEEESVALEQAQKVRYEGSYALTSEEAERSDGDPVQPAVLQVHQTS</sequence>
<protein>
    <recommendedName>
        <fullName evidence="16">Caveolae-associated protein 2</fullName>
    </recommendedName>
    <alternativeName>
        <fullName>Cavin-2</fullName>
    </alternativeName>
    <alternativeName>
        <fullName>PS-p68</fullName>
    </alternativeName>
    <alternativeName>
        <fullName>Phosphatidylserine-binding protein</fullName>
    </alternativeName>
    <alternativeName>
        <fullName>Serum deprivation-response protein</fullName>
    </alternativeName>
</protein>
<proteinExistence type="evidence at protein level"/>
<reference evidence="12 13" key="1">
    <citation type="journal article" date="1999" name="Genomics">
        <title>The human serum deprivation response gene (SDPR) maps to 2q32-q33 and codes for a phosphatidylserine-binding protein.</title>
        <authorList>
            <person name="Gustincich S."/>
            <person name="Vatta P."/>
            <person name="Goruppi S."/>
            <person name="Wolf M."/>
            <person name="Saccone S."/>
            <person name="Della Valle G."/>
            <person name="Baggiolini M."/>
            <person name="Schneider C."/>
        </authorList>
    </citation>
    <scope>NUCLEOTIDE SEQUENCE [MRNA]</scope>
    <scope>SUBCELLULAR LOCATION</scope>
    <scope>TISSUE SPECIFICITY</scope>
    <scope>INDUCTION</scope>
    <scope>PHOSPHOLIPID-BINDING</scope>
</reference>
<reference evidence="15" key="2">
    <citation type="journal article" date="2005" name="Nature">
        <title>Generation and annotation of the DNA sequences of human chromosomes 2 and 4.</title>
        <authorList>
            <person name="Hillier L.W."/>
            <person name="Graves T.A."/>
            <person name="Fulton R.S."/>
            <person name="Fulton L.A."/>
            <person name="Pepin K.H."/>
            <person name="Minx P."/>
            <person name="Wagner-McPherson C."/>
            <person name="Layman D."/>
            <person name="Wylie K."/>
            <person name="Sekhon M."/>
            <person name="Becker M.C."/>
            <person name="Fewell G.A."/>
            <person name="Delehaunty K.D."/>
            <person name="Miner T.L."/>
            <person name="Nash W.E."/>
            <person name="Kremitzki C."/>
            <person name="Oddy L."/>
            <person name="Du H."/>
            <person name="Sun H."/>
            <person name="Bradshaw-Cordum H."/>
            <person name="Ali J."/>
            <person name="Carter J."/>
            <person name="Cordes M."/>
            <person name="Harris A."/>
            <person name="Isak A."/>
            <person name="van Brunt A."/>
            <person name="Nguyen C."/>
            <person name="Du F."/>
            <person name="Courtney L."/>
            <person name="Kalicki J."/>
            <person name="Ozersky P."/>
            <person name="Abbott S."/>
            <person name="Armstrong J."/>
            <person name="Belter E.A."/>
            <person name="Caruso L."/>
            <person name="Cedroni M."/>
            <person name="Cotton M."/>
            <person name="Davidson T."/>
            <person name="Desai A."/>
            <person name="Elliott G."/>
            <person name="Erb T."/>
            <person name="Fronick C."/>
            <person name="Gaige T."/>
            <person name="Haakenson W."/>
            <person name="Haglund K."/>
            <person name="Holmes A."/>
            <person name="Harkins R."/>
            <person name="Kim K."/>
            <person name="Kruchowski S.S."/>
            <person name="Strong C.M."/>
            <person name="Grewal N."/>
            <person name="Goyea E."/>
            <person name="Hou S."/>
            <person name="Levy A."/>
            <person name="Martinka S."/>
            <person name="Mead K."/>
            <person name="McLellan M.D."/>
            <person name="Meyer R."/>
            <person name="Randall-Maher J."/>
            <person name="Tomlinson C."/>
            <person name="Dauphin-Kohlberg S."/>
            <person name="Kozlowicz-Reilly A."/>
            <person name="Shah N."/>
            <person name="Swearengen-Shahid S."/>
            <person name="Snider J."/>
            <person name="Strong J.T."/>
            <person name="Thompson J."/>
            <person name="Yoakum M."/>
            <person name="Leonard S."/>
            <person name="Pearman C."/>
            <person name="Trani L."/>
            <person name="Radionenko M."/>
            <person name="Waligorski J.E."/>
            <person name="Wang C."/>
            <person name="Rock S.M."/>
            <person name="Tin-Wollam A.-M."/>
            <person name="Maupin R."/>
            <person name="Latreille P."/>
            <person name="Wendl M.C."/>
            <person name="Yang S.-P."/>
            <person name="Pohl C."/>
            <person name="Wallis J.W."/>
            <person name="Spieth J."/>
            <person name="Bieri T.A."/>
            <person name="Berkowicz N."/>
            <person name="Nelson J.O."/>
            <person name="Osborne J."/>
            <person name="Ding L."/>
            <person name="Meyer R."/>
            <person name="Sabo A."/>
            <person name="Shotland Y."/>
            <person name="Sinha P."/>
            <person name="Wohldmann P.E."/>
            <person name="Cook L.L."/>
            <person name="Hickenbotham M.T."/>
            <person name="Eldred J."/>
            <person name="Williams D."/>
            <person name="Jones T.A."/>
            <person name="She X."/>
            <person name="Ciccarelli F.D."/>
            <person name="Izaurralde E."/>
            <person name="Taylor J."/>
            <person name="Schmutz J."/>
            <person name="Myers R.M."/>
            <person name="Cox D.R."/>
            <person name="Huang X."/>
            <person name="McPherson J.D."/>
            <person name="Mardis E.R."/>
            <person name="Clifton S.W."/>
            <person name="Warren W.C."/>
            <person name="Chinwalla A.T."/>
            <person name="Eddy S.R."/>
            <person name="Marra M.A."/>
            <person name="Ovcharenko I."/>
            <person name="Furey T.S."/>
            <person name="Miller W."/>
            <person name="Eichler E.E."/>
            <person name="Bork P."/>
            <person name="Suyama M."/>
            <person name="Torrents D."/>
            <person name="Waterston R.H."/>
            <person name="Wilson R.K."/>
        </authorList>
    </citation>
    <scope>NUCLEOTIDE SEQUENCE [LARGE SCALE GENOMIC DNA]</scope>
</reference>
<reference evidence="14" key="3">
    <citation type="journal article" date="2004" name="Genome Res.">
        <title>The status, quality, and expansion of the NIH full-length cDNA project: the Mammalian Gene Collection (MGC).</title>
        <authorList>
            <consortium name="The MGC Project Team"/>
        </authorList>
    </citation>
    <scope>NUCLEOTIDE SEQUENCE [LARGE SCALE MRNA]</scope>
    <source>
        <tissue evidence="14">Lung</tissue>
    </source>
</reference>
<reference key="4">
    <citation type="submission" date="2005-11" db="UniProtKB">
        <authorList>
            <person name="Bienvenut W.V."/>
            <person name="Claeys D."/>
        </authorList>
    </citation>
    <scope>PROTEIN SEQUENCE OF 2-10; 49-64; 92-99; 103-113 AND 157-173</scope>
    <scope>CLEAVAGE OF INITIATOR METHIONINE</scope>
    <scope>ACETYLATION AT GLY-2</scope>
    <scope>IDENTIFICATION BY MASS SPECTROMETRY</scope>
    <source>
        <tissue>Platelet</tissue>
    </source>
</reference>
<reference evidence="12 13" key="5">
    <citation type="journal article" date="1990" name="Biochem. J.">
        <title>Purification and characterization of a major phosphatidylserine-binding phosphoprotein from human platelets.</title>
        <authorList>
            <person name="Burgener R."/>
            <person name="Wolf M."/>
            <person name="Ganz T."/>
            <person name="Baggiolini M."/>
        </authorList>
    </citation>
    <scope>PROTEIN SEQUENCE OF 80-109; 133-157 AND 256-275</scope>
    <scope>SUBCELLULAR LOCATION</scope>
    <scope>PHOSPHORYLATION</scope>
    <scope>PHOSPHOLIPID-BINDING</scope>
</reference>
<reference key="6">
    <citation type="journal article" date="2008" name="J. Proteome Res.">
        <title>Phosphorylation analysis of primary human T lymphocytes using sequential IMAC and titanium oxide enrichment.</title>
        <authorList>
            <person name="Carrascal M."/>
            <person name="Ovelleiro D."/>
            <person name="Casas V."/>
            <person name="Gay M."/>
            <person name="Abian J."/>
        </authorList>
    </citation>
    <scope>PHOSPHORYLATION [LARGE SCALE ANALYSIS] AT SER-293</scope>
    <scope>IDENTIFICATION BY MASS SPECTROMETRY [LARGE SCALE ANALYSIS]</scope>
    <source>
        <tissue>T-cell</tissue>
    </source>
</reference>
<reference key="7">
    <citation type="journal article" date="2008" name="Mol. Cell. Biol.">
        <title>MURC, a muscle-restricted coiled-coil protein that modulates the Rho/ROCK pathway, induces cardiac dysfunction and conduction disturbance.</title>
        <authorList>
            <person name="Ogata T."/>
            <person name="Ueyama T."/>
            <person name="Isodono K."/>
            <person name="Tagawa M."/>
            <person name="Takehara N."/>
            <person name="Kawashima T."/>
            <person name="Harada K."/>
            <person name="Takahashi T."/>
            <person name="Shioi T."/>
            <person name="Matsubara H."/>
            <person name="Oh H."/>
        </authorList>
    </citation>
    <scope>INTERACTION WITH CAVIN4</scope>
</reference>
<reference key="8">
    <citation type="journal article" date="2008" name="Proc. Natl. Acad. Sci. U.S.A.">
        <title>A quantitative atlas of mitotic phosphorylation.</title>
        <authorList>
            <person name="Dephoure N."/>
            <person name="Zhou C."/>
            <person name="Villen J."/>
            <person name="Beausoleil S.A."/>
            <person name="Bakalarski C.E."/>
            <person name="Elledge S.J."/>
            <person name="Gygi S.P."/>
        </authorList>
    </citation>
    <scope>PHOSPHORYLATION [LARGE SCALE ANALYSIS] AT SER-293</scope>
    <scope>IDENTIFICATION BY MASS SPECTROMETRY [LARGE SCALE ANALYSIS]</scope>
    <source>
        <tissue>Cervix carcinoma</tissue>
    </source>
</reference>
<reference key="9">
    <citation type="journal article" date="2009" name="EMBO J.">
        <title>SRBC/cavin-3 is a caveolin adapter protein that regulates caveolae function.</title>
        <authorList>
            <person name="McMahon K.A."/>
            <person name="Zajicek H."/>
            <person name="Li W.P."/>
            <person name="Peyton M.J."/>
            <person name="Minna J.D."/>
            <person name="Hernandez V.J."/>
            <person name="Luby-Phelps K."/>
            <person name="Anderson R.G."/>
        </authorList>
    </citation>
    <scope>SUBCELLULAR LOCATION</scope>
    <scope>DOMAIN LEUCINE ZIPPER</scope>
    <scope>MUTAGENESIS OF LEU-86; ILE-93 AND LEU-100</scope>
</reference>
<reference key="10">
    <citation type="journal article" date="2009" name="Nat. Cell Biol.">
        <title>SDPR induces membrane curvature and functions in the formation of caveolae.</title>
        <authorList>
            <person name="Hansen C.G."/>
            <person name="Bright N.A."/>
            <person name="Howard G."/>
            <person name="Nichols B.J."/>
        </authorList>
    </citation>
    <scope>FUNCTION</scope>
    <scope>SUBCELLULAR LOCATION</scope>
    <scope>INTERACTION WITH CAVIN1</scope>
</reference>
<reference key="11">
    <citation type="journal article" date="2013" name="J. Proteome Res.">
        <title>Toward a comprehensive characterization of a human cancer cell phosphoproteome.</title>
        <authorList>
            <person name="Zhou H."/>
            <person name="Di Palma S."/>
            <person name="Preisinger C."/>
            <person name="Peng M."/>
            <person name="Polat A.N."/>
            <person name="Heck A.J."/>
            <person name="Mohammed S."/>
        </authorList>
    </citation>
    <scope>PHOSPHORYLATION [LARGE SCALE ANALYSIS] AT SER-288 AND SER-293</scope>
    <scope>IDENTIFICATION BY MASS SPECTROMETRY [LARGE SCALE ANALYSIS]</scope>
    <source>
        <tissue>Erythroleukemia</tissue>
    </source>
</reference>
<reference key="12">
    <citation type="journal article" date="2014" name="J. Proteomics">
        <title>An enzyme assisted RP-RPLC approach for in-depth analysis of human liver phosphoproteome.</title>
        <authorList>
            <person name="Bian Y."/>
            <person name="Song C."/>
            <person name="Cheng K."/>
            <person name="Dong M."/>
            <person name="Wang F."/>
            <person name="Huang J."/>
            <person name="Sun D."/>
            <person name="Wang L."/>
            <person name="Ye M."/>
            <person name="Zou H."/>
        </authorList>
    </citation>
    <scope>PHOSPHORYLATION [LARGE SCALE ANALYSIS] AT SER-35; THR-196; THR-199; SER-203; SER-204; SER-218; SER-287 AND SER-288</scope>
    <scope>IDENTIFICATION BY MASS SPECTROMETRY [LARGE SCALE ANALYSIS]</scope>
    <source>
        <tissue>Liver</tissue>
    </source>
</reference>
<reference key="13">
    <citation type="journal article" date="2014" name="Proc. Natl. Acad. Sci. U.S.A.">
        <title>MURC/Cavin-4 facilitates recruitment of ERK to caveolae and concentric cardiac hypertrophy induced by alpha1-adrenergic receptors.</title>
        <authorList>
            <person name="Ogata T."/>
            <person name="Naito D."/>
            <person name="Nakanishi N."/>
            <person name="Hayashi Y.K."/>
            <person name="Taniguchi T."/>
            <person name="Miyagawa K."/>
            <person name="Hamaoka T."/>
            <person name="Maruyama N."/>
            <person name="Matoba S."/>
            <person name="Ikeda K."/>
            <person name="Yamada H."/>
            <person name="Oh H."/>
            <person name="Ueyama T."/>
        </authorList>
    </citation>
    <scope>INTERACTION WITH CAVIN1; CAVIN4 AND CAV3</scope>
</reference>
<reference key="14">
    <citation type="journal article" date="2015" name="Int. Rev. Cell Mol. Biol.">
        <title>Cavin family: new players in the biology of caveolae.</title>
        <authorList>
            <person name="Nassar Z.D."/>
            <person name="Parat M.O."/>
        </authorList>
    </citation>
    <scope>REVIEW</scope>
</reference>
<feature type="initiator methionine" description="Removed" evidence="11">
    <location>
        <position position="1"/>
    </location>
</feature>
<feature type="chain" id="PRO_0000238918" description="Caveolae-associated protein 2">
    <location>
        <begin position="2"/>
        <end position="425"/>
    </location>
</feature>
<feature type="region of interest" description="Disordered" evidence="4">
    <location>
        <begin position="1"/>
        <end position="42"/>
    </location>
</feature>
<feature type="region of interest" description="Interaction with CAVIN1" evidence="1">
    <location>
        <begin position="2"/>
        <end position="168"/>
    </location>
</feature>
<feature type="region of interest" description="Leucine-zipper" evidence="7">
    <location>
        <begin position="62"/>
        <end position="100"/>
    </location>
</feature>
<feature type="region of interest" description="Disordered" evidence="4">
    <location>
        <begin position="199"/>
        <end position="234"/>
    </location>
</feature>
<feature type="region of interest" description="Disordered" evidence="4">
    <location>
        <begin position="271"/>
        <end position="425"/>
    </location>
</feature>
<feature type="coiled-coil region" evidence="3">
    <location>
        <begin position="61"/>
        <end position="82"/>
    </location>
</feature>
<feature type="coiled-coil region" evidence="3">
    <location>
        <begin position="125"/>
        <end position="154"/>
    </location>
</feature>
<feature type="coiled-coil region" evidence="3">
    <location>
        <begin position="210"/>
        <end position="268"/>
    </location>
</feature>
<feature type="compositionally biased region" description="Basic and acidic residues" evidence="4">
    <location>
        <begin position="10"/>
        <end position="22"/>
    </location>
</feature>
<feature type="compositionally biased region" description="Acidic residues" evidence="4">
    <location>
        <begin position="203"/>
        <end position="219"/>
    </location>
</feature>
<feature type="compositionally biased region" description="Basic and acidic residues" evidence="4">
    <location>
        <begin position="220"/>
        <end position="234"/>
    </location>
</feature>
<feature type="compositionally biased region" description="Polar residues" evidence="4">
    <location>
        <begin position="274"/>
        <end position="287"/>
    </location>
</feature>
<feature type="compositionally biased region" description="Basic and acidic residues" evidence="4">
    <location>
        <begin position="303"/>
        <end position="317"/>
    </location>
</feature>
<feature type="compositionally biased region" description="Acidic residues" evidence="4">
    <location>
        <begin position="376"/>
        <end position="385"/>
    </location>
</feature>
<feature type="modified residue" description="N-acetylglycine" evidence="11">
    <location>
        <position position="2"/>
    </location>
</feature>
<feature type="modified residue" description="Phosphoserine" evidence="1">
    <location>
        <position position="27"/>
    </location>
</feature>
<feature type="modified residue" description="Phosphoserine" evidence="20">
    <location>
        <position position="35"/>
    </location>
</feature>
<feature type="modified residue" description="Phosphoserine" evidence="1">
    <location>
        <position position="37"/>
    </location>
</feature>
<feature type="modified residue" description="Phosphoserine" evidence="2">
    <location>
        <position position="51"/>
    </location>
</feature>
<feature type="modified residue" description="Phosphothreonine" evidence="20">
    <location>
        <position position="196"/>
    </location>
</feature>
<feature type="modified residue" description="Phosphothreonine" evidence="20">
    <location>
        <position position="199"/>
    </location>
</feature>
<feature type="modified residue" description="Phosphoserine" evidence="20">
    <location>
        <position position="203"/>
    </location>
</feature>
<feature type="modified residue" description="Phosphoserine" evidence="20">
    <location>
        <position position="204"/>
    </location>
</feature>
<feature type="modified residue" description="Phosphoserine" evidence="20">
    <location>
        <position position="218"/>
    </location>
</feature>
<feature type="modified residue" description="Phosphoserine" evidence="1">
    <location>
        <position position="283"/>
    </location>
</feature>
<feature type="modified residue" description="Phosphoserine" evidence="1">
    <location>
        <position position="284"/>
    </location>
</feature>
<feature type="modified residue" description="Phosphoserine" evidence="20">
    <location>
        <position position="287"/>
    </location>
</feature>
<feature type="modified residue" description="Phosphoserine" evidence="19 20">
    <location>
        <position position="288"/>
    </location>
</feature>
<feature type="modified residue" description="Phosphoserine" evidence="17 18 19">
    <location>
        <position position="293"/>
    </location>
</feature>
<feature type="modified residue" description="Phosphoserine" evidence="1">
    <location>
        <position position="332"/>
    </location>
</feature>
<feature type="modified residue" description="Phosphoserine" evidence="1">
    <location>
        <position position="341"/>
    </location>
</feature>
<feature type="modified residue" description="Phosphoserine" evidence="1">
    <location>
        <position position="366"/>
    </location>
</feature>
<feature type="modified residue" description="Phosphoserine" evidence="1">
    <location>
        <position position="370"/>
    </location>
</feature>
<feature type="modified residue" description="Phosphothreonine" evidence="1">
    <location>
        <position position="375"/>
    </location>
</feature>
<feature type="modified residue" description="Phosphotyrosine" evidence="1">
    <location>
        <position position="395"/>
    </location>
</feature>
<feature type="modified residue" description="Phosphoserine" evidence="2">
    <location>
        <position position="403"/>
    </location>
</feature>
<feature type="sequence variant" id="VAR_034422" description="In dbSNP:rs35012125.">
    <original>E</original>
    <variation>D</variation>
    <location>
        <position position="130"/>
    </location>
</feature>
<feature type="mutagenesis site" description="Loss of localization in caveolae; when associated with E-93 or E-100." evidence="7">
    <original>L</original>
    <variation>E</variation>
    <location>
        <position position="86"/>
    </location>
</feature>
<feature type="mutagenesis site" description="Loss of localization in caveolae; when associated with E-86 or E-100." evidence="7">
    <original>I</original>
    <variation>E</variation>
    <location>
        <position position="93"/>
    </location>
</feature>
<feature type="mutagenesis site" description="Loss of localization in caveolae; when associated with E-86 or E-93." evidence="7">
    <original>L</original>
    <variation>E</variation>
    <location>
        <position position="100"/>
    </location>
</feature>
<organism>
    <name type="scientific">Homo sapiens</name>
    <name type="common">Human</name>
    <dbReference type="NCBI Taxonomy" id="9606"/>
    <lineage>
        <taxon>Eukaryota</taxon>
        <taxon>Metazoa</taxon>
        <taxon>Chordata</taxon>
        <taxon>Craniata</taxon>
        <taxon>Vertebrata</taxon>
        <taxon>Euteleostomi</taxon>
        <taxon>Mammalia</taxon>
        <taxon>Eutheria</taxon>
        <taxon>Euarchontoglires</taxon>
        <taxon>Primates</taxon>
        <taxon>Haplorrhini</taxon>
        <taxon>Catarrhini</taxon>
        <taxon>Hominidae</taxon>
        <taxon>Homo</taxon>
    </lineage>
</organism>
<name>CAVN2_HUMAN</name>
<gene>
    <name evidence="16" type="primary">CAVIN2</name>
    <name evidence="13" type="synonym">SDPR</name>
</gene>
<evidence type="ECO:0000250" key="1">
    <source>
        <dbReference type="UniProtKB" id="Q63918"/>
    </source>
</evidence>
<evidence type="ECO:0000250" key="2">
    <source>
        <dbReference type="UniProtKB" id="Q66H98"/>
    </source>
</evidence>
<evidence type="ECO:0000255" key="3"/>
<evidence type="ECO:0000256" key="4">
    <source>
        <dbReference type="SAM" id="MobiDB-lite"/>
    </source>
</evidence>
<evidence type="ECO:0000269" key="5">
    <source>
    </source>
</evidence>
<evidence type="ECO:0000269" key="6">
    <source>
    </source>
</evidence>
<evidence type="ECO:0000269" key="7">
    <source>
    </source>
</evidence>
<evidence type="ECO:0000269" key="8">
    <source>
    </source>
</evidence>
<evidence type="ECO:0000269" key="9">
    <source>
    </source>
</evidence>
<evidence type="ECO:0000269" key="10">
    <source>
    </source>
</evidence>
<evidence type="ECO:0000269" key="11">
    <source ref="4"/>
</evidence>
<evidence type="ECO:0000305" key="12"/>
<evidence type="ECO:0000312" key="13">
    <source>
        <dbReference type="EMBL" id="AAD17795.1"/>
    </source>
</evidence>
<evidence type="ECO:0000312" key="14">
    <source>
        <dbReference type="EMBL" id="AAH16475.1"/>
    </source>
</evidence>
<evidence type="ECO:0000312" key="15">
    <source>
        <dbReference type="EMBL" id="AAY24078.1"/>
    </source>
</evidence>
<evidence type="ECO:0000312" key="16">
    <source>
        <dbReference type="HGNC" id="HGNC:10690"/>
    </source>
</evidence>
<evidence type="ECO:0007744" key="17">
    <source>
    </source>
</evidence>
<evidence type="ECO:0007744" key="18">
    <source>
    </source>
</evidence>
<evidence type="ECO:0007744" key="19">
    <source>
    </source>
</evidence>
<evidence type="ECO:0007744" key="20">
    <source>
    </source>
</evidence>
<keyword id="KW-0007">Acetylation</keyword>
<keyword id="KW-0175">Coiled coil</keyword>
<keyword id="KW-0963">Cytoplasm</keyword>
<keyword id="KW-0903">Direct protein sequencing</keyword>
<keyword id="KW-0446">Lipid-binding</keyword>
<keyword id="KW-0472">Membrane</keyword>
<keyword id="KW-0597">Phosphoprotein</keyword>
<keyword id="KW-1267">Proteomics identification</keyword>
<keyword id="KW-1185">Reference proteome</keyword>
<dbReference type="EMBL" id="AF085481">
    <property type="protein sequence ID" value="AAD17795.1"/>
    <property type="molecule type" value="mRNA"/>
</dbReference>
<dbReference type="EMBL" id="AC098872">
    <property type="protein sequence ID" value="AAY24078.1"/>
    <property type="molecule type" value="Genomic_DNA"/>
</dbReference>
<dbReference type="EMBL" id="BC016475">
    <property type="protein sequence ID" value="AAH16475.1"/>
    <property type="molecule type" value="mRNA"/>
</dbReference>
<dbReference type="CCDS" id="CCDS2313.1"/>
<dbReference type="RefSeq" id="NP_004648.1">
    <property type="nucleotide sequence ID" value="NM_004657.6"/>
</dbReference>
<dbReference type="SMR" id="O95810"/>
<dbReference type="BioGRID" id="114016">
    <property type="interactions" value="67"/>
</dbReference>
<dbReference type="DIP" id="DIP-56943N"/>
<dbReference type="FunCoup" id="O95810">
    <property type="interactions" value="578"/>
</dbReference>
<dbReference type="IntAct" id="O95810">
    <property type="interactions" value="21"/>
</dbReference>
<dbReference type="MINT" id="O95810"/>
<dbReference type="STRING" id="9606.ENSP00000305675"/>
<dbReference type="CarbonylDB" id="O95810"/>
<dbReference type="GlyGen" id="O95810">
    <property type="glycosylation" value="1 site, 1 O-linked glycan (1 site)"/>
</dbReference>
<dbReference type="iPTMnet" id="O95810"/>
<dbReference type="PhosphoSitePlus" id="O95810"/>
<dbReference type="SwissPalm" id="O95810"/>
<dbReference type="BioMuta" id="CAVIN2"/>
<dbReference type="OGP" id="O95810"/>
<dbReference type="jPOST" id="O95810"/>
<dbReference type="MassIVE" id="O95810"/>
<dbReference type="PaxDb" id="9606-ENSP00000305675"/>
<dbReference type="PeptideAtlas" id="O95810"/>
<dbReference type="ProteomicsDB" id="51062"/>
<dbReference type="Pumba" id="O95810"/>
<dbReference type="TopDownProteomics" id="O95810"/>
<dbReference type="Antibodypedia" id="34051">
    <property type="antibodies" value="124 antibodies from 26 providers"/>
</dbReference>
<dbReference type="DNASU" id="8436"/>
<dbReference type="Ensembl" id="ENST00000304141.5">
    <property type="protein sequence ID" value="ENSP00000305675.4"/>
    <property type="gene ID" value="ENSG00000168497.5"/>
</dbReference>
<dbReference type="GeneID" id="8436"/>
<dbReference type="KEGG" id="hsa:8436"/>
<dbReference type="MANE-Select" id="ENST00000304141.5">
    <property type="protein sequence ID" value="ENSP00000305675.4"/>
    <property type="RefSeq nucleotide sequence ID" value="NM_004657.6"/>
    <property type="RefSeq protein sequence ID" value="NP_004648.1"/>
</dbReference>
<dbReference type="UCSC" id="uc002utb.4">
    <property type="organism name" value="human"/>
</dbReference>
<dbReference type="AGR" id="HGNC:10690"/>
<dbReference type="CTD" id="8436"/>
<dbReference type="DisGeNET" id="8436"/>
<dbReference type="GeneCards" id="CAVIN2"/>
<dbReference type="HGNC" id="HGNC:10690">
    <property type="gene designation" value="CAVIN2"/>
</dbReference>
<dbReference type="HPA" id="ENSG00000168497">
    <property type="expression patterns" value="Tissue enhanced (adipose)"/>
</dbReference>
<dbReference type="MIM" id="606728">
    <property type="type" value="gene"/>
</dbReference>
<dbReference type="neXtProt" id="NX_O95810"/>
<dbReference type="OpenTargets" id="ENSG00000168497"/>
<dbReference type="PharmGKB" id="PA35615"/>
<dbReference type="VEuPathDB" id="HostDB:ENSG00000168497"/>
<dbReference type="eggNOG" id="ENOG502QQCA">
    <property type="taxonomic scope" value="Eukaryota"/>
</dbReference>
<dbReference type="GeneTree" id="ENSGT00950000182910"/>
<dbReference type="HOGENOM" id="CLU_039470_1_0_1"/>
<dbReference type="InParanoid" id="O95810"/>
<dbReference type="OMA" id="QMPNDQE"/>
<dbReference type="OrthoDB" id="8910748at2759"/>
<dbReference type="PAN-GO" id="O95810">
    <property type="GO annotations" value="3 GO annotations based on evolutionary models"/>
</dbReference>
<dbReference type="PhylomeDB" id="O95810"/>
<dbReference type="TreeFam" id="TF331031"/>
<dbReference type="PathwayCommons" id="O95810"/>
<dbReference type="SignaLink" id="O95810"/>
<dbReference type="BioGRID-ORCS" id="8436">
    <property type="hits" value="12 hits in 1153 CRISPR screens"/>
</dbReference>
<dbReference type="ChiTaRS" id="SDPR">
    <property type="organism name" value="human"/>
</dbReference>
<dbReference type="GeneWiki" id="SDPR"/>
<dbReference type="GenomeRNAi" id="8436"/>
<dbReference type="Pharos" id="O95810">
    <property type="development level" value="Tbio"/>
</dbReference>
<dbReference type="PRO" id="PR:O95810"/>
<dbReference type="Proteomes" id="UP000005640">
    <property type="component" value="Chromosome 2"/>
</dbReference>
<dbReference type="RNAct" id="O95810">
    <property type="molecule type" value="protein"/>
</dbReference>
<dbReference type="Bgee" id="ENSG00000168497">
    <property type="expression patterns" value="Expressed in monocyte and 171 other cell types or tissues"/>
</dbReference>
<dbReference type="GO" id="GO:0005901">
    <property type="term" value="C:caveola"/>
    <property type="evidence" value="ECO:0000314"/>
    <property type="project" value="UniProtKB"/>
</dbReference>
<dbReference type="GO" id="GO:0005737">
    <property type="term" value="C:cytoplasm"/>
    <property type="evidence" value="ECO:0000314"/>
    <property type="project" value="MGI"/>
</dbReference>
<dbReference type="GO" id="GO:0005829">
    <property type="term" value="C:cytosol"/>
    <property type="evidence" value="ECO:0000314"/>
    <property type="project" value="UniProtKB"/>
</dbReference>
<dbReference type="GO" id="GO:0045121">
    <property type="term" value="C:membrane raft"/>
    <property type="evidence" value="ECO:0000314"/>
    <property type="project" value="UniProtKB"/>
</dbReference>
<dbReference type="GO" id="GO:0005654">
    <property type="term" value="C:nucleoplasm"/>
    <property type="evidence" value="ECO:0000314"/>
    <property type="project" value="HPA"/>
</dbReference>
<dbReference type="GO" id="GO:0005886">
    <property type="term" value="C:plasma membrane"/>
    <property type="evidence" value="ECO:0000314"/>
    <property type="project" value="HPA"/>
</dbReference>
<dbReference type="GO" id="GO:0001786">
    <property type="term" value="F:phosphatidylserine binding"/>
    <property type="evidence" value="ECO:0000314"/>
    <property type="project" value="UniProtKB"/>
</dbReference>
<dbReference type="GO" id="GO:0005543">
    <property type="term" value="F:phospholipid binding"/>
    <property type="evidence" value="ECO:0000304"/>
    <property type="project" value="ProtInc"/>
</dbReference>
<dbReference type="GO" id="GO:0005080">
    <property type="term" value="F:protein kinase C binding"/>
    <property type="evidence" value="ECO:0000318"/>
    <property type="project" value="GO_Central"/>
</dbReference>
<dbReference type="GO" id="GO:0097320">
    <property type="term" value="P:plasma membrane tubulation"/>
    <property type="evidence" value="ECO:0000314"/>
    <property type="project" value="UniProtKB"/>
</dbReference>
<dbReference type="InterPro" id="IPR026752">
    <property type="entry name" value="Cavin_fam"/>
</dbReference>
<dbReference type="PANTHER" id="PTHR15240:SF1">
    <property type="entry name" value="CAVEOLAE-ASSOCIATED PROTEIN 2"/>
    <property type="match status" value="1"/>
</dbReference>
<dbReference type="PANTHER" id="PTHR15240">
    <property type="entry name" value="CAVIN"/>
    <property type="match status" value="1"/>
</dbReference>
<dbReference type="Pfam" id="PF15237">
    <property type="entry name" value="PTRF_SDPR"/>
    <property type="match status" value="1"/>
</dbReference>
<accession>O95810</accession>